<name>TYSY_HAEI8</name>
<comment type="function">
    <text evidence="1">Catalyzes the reductive methylation of 2'-deoxyuridine-5'-monophosphate (dUMP) to 2'-deoxythymidine-5'-monophosphate (dTMP) while utilizing 5,10-methylenetetrahydrofolate (mTHF) as the methyl donor and reductant in the reaction, yielding dihydrofolate (DHF) as a by-product. This enzymatic reaction provides an intracellular de novo source of dTMP, an essential precursor for DNA biosynthesis.</text>
</comment>
<comment type="catalytic activity">
    <reaction evidence="1">
        <text>dUMP + (6R)-5,10-methylene-5,6,7,8-tetrahydrofolate = 7,8-dihydrofolate + dTMP</text>
        <dbReference type="Rhea" id="RHEA:12104"/>
        <dbReference type="ChEBI" id="CHEBI:15636"/>
        <dbReference type="ChEBI" id="CHEBI:57451"/>
        <dbReference type="ChEBI" id="CHEBI:63528"/>
        <dbReference type="ChEBI" id="CHEBI:246422"/>
        <dbReference type="EC" id="2.1.1.45"/>
    </reaction>
</comment>
<comment type="pathway">
    <text evidence="1">Pyrimidine metabolism; dTTP biosynthesis.</text>
</comment>
<comment type="subunit">
    <text evidence="1">Homodimer.</text>
</comment>
<comment type="subcellular location">
    <subcellularLocation>
        <location evidence="1">Cytoplasm</location>
    </subcellularLocation>
</comment>
<comment type="similarity">
    <text evidence="1">Belongs to the thymidylate synthase family. Bacterial-type ThyA subfamily.</text>
</comment>
<reference key="1">
    <citation type="journal article" date="2005" name="J. Bacteriol.">
        <title>Genomic sequence of an otitis media isolate of nontypeable Haemophilus influenzae: comparative study with H. influenzae serotype d, strain KW20.</title>
        <authorList>
            <person name="Harrison A."/>
            <person name="Dyer D.W."/>
            <person name="Gillaspy A."/>
            <person name="Ray W.C."/>
            <person name="Mungur R."/>
            <person name="Carson M.B."/>
            <person name="Zhong H."/>
            <person name="Gipson J."/>
            <person name="Gipson M."/>
            <person name="Johnson L.S."/>
            <person name="Lewis L."/>
            <person name="Bakaletz L.O."/>
            <person name="Munson R.S. Jr."/>
        </authorList>
    </citation>
    <scope>NUCLEOTIDE SEQUENCE [LARGE SCALE GENOMIC DNA]</scope>
    <source>
        <strain>86-028NP</strain>
    </source>
</reference>
<proteinExistence type="inferred from homology"/>
<keyword id="KW-0963">Cytoplasm</keyword>
<keyword id="KW-0489">Methyltransferase</keyword>
<keyword id="KW-0545">Nucleotide biosynthesis</keyword>
<keyword id="KW-0808">Transferase</keyword>
<sequence length="283" mass="32416">MKQYLDLCRRIVSEGEWVANERTGKHCLTVINADLEYDVANNQFPLITTRKSYWKAAIAEFLGYIRGYDNAADFRALGTKTWDANANVNAAWLANPHRRGVDDMGRVYGVQGRAWRKPNGETIDQLRKIVNNLTKGIDDRGEILTFFNPGEFDLGCLRPCMHTHTFSLVGDTLHLTSYQRSCDVPLGLNFNQIQVFTFLALMAQITGKKAGKAYHKIVNAHIYEDQLELMRDVQLKREPFPLPKLEINPDIKTLEDLETWVTMDDFKVVGYQSHEPIKYPFSV</sequence>
<dbReference type="EC" id="2.1.1.45" evidence="1"/>
<dbReference type="EMBL" id="CP000057">
    <property type="protein sequence ID" value="AAX87943.1"/>
    <property type="molecule type" value="Genomic_DNA"/>
</dbReference>
<dbReference type="RefSeq" id="WP_011272279.1">
    <property type="nucleotide sequence ID" value="NC_007146.2"/>
</dbReference>
<dbReference type="SMR" id="Q4QM04"/>
<dbReference type="KEGG" id="hit:NTHI1072"/>
<dbReference type="HOGENOM" id="CLU_021669_0_1_6"/>
<dbReference type="UniPathway" id="UPA00575"/>
<dbReference type="Proteomes" id="UP000002525">
    <property type="component" value="Chromosome"/>
</dbReference>
<dbReference type="GO" id="GO:0005829">
    <property type="term" value="C:cytosol"/>
    <property type="evidence" value="ECO:0007669"/>
    <property type="project" value="TreeGrafter"/>
</dbReference>
<dbReference type="GO" id="GO:0004799">
    <property type="term" value="F:thymidylate synthase activity"/>
    <property type="evidence" value="ECO:0007669"/>
    <property type="project" value="UniProtKB-UniRule"/>
</dbReference>
<dbReference type="GO" id="GO:0006231">
    <property type="term" value="P:dTMP biosynthetic process"/>
    <property type="evidence" value="ECO:0007669"/>
    <property type="project" value="UniProtKB-UniRule"/>
</dbReference>
<dbReference type="GO" id="GO:0006235">
    <property type="term" value="P:dTTP biosynthetic process"/>
    <property type="evidence" value="ECO:0007669"/>
    <property type="project" value="UniProtKB-UniRule"/>
</dbReference>
<dbReference type="GO" id="GO:0032259">
    <property type="term" value="P:methylation"/>
    <property type="evidence" value="ECO:0007669"/>
    <property type="project" value="UniProtKB-KW"/>
</dbReference>
<dbReference type="CDD" id="cd00351">
    <property type="entry name" value="TS_Pyrimidine_HMase"/>
    <property type="match status" value="1"/>
</dbReference>
<dbReference type="FunFam" id="3.30.572.10:FF:000003">
    <property type="entry name" value="Thymidylate synthase"/>
    <property type="match status" value="1"/>
</dbReference>
<dbReference type="Gene3D" id="3.30.572.10">
    <property type="entry name" value="Thymidylate synthase/dCMP hydroxymethylase domain"/>
    <property type="match status" value="1"/>
</dbReference>
<dbReference type="HAMAP" id="MF_00008">
    <property type="entry name" value="Thymidy_synth_bact"/>
    <property type="match status" value="1"/>
</dbReference>
<dbReference type="InterPro" id="IPR045097">
    <property type="entry name" value="Thymidate_synth/dCMP_Mease"/>
</dbReference>
<dbReference type="InterPro" id="IPR023451">
    <property type="entry name" value="Thymidate_synth/dCMP_Mease_dom"/>
</dbReference>
<dbReference type="InterPro" id="IPR036926">
    <property type="entry name" value="Thymidate_synth/dCMP_Mease_sf"/>
</dbReference>
<dbReference type="InterPro" id="IPR000398">
    <property type="entry name" value="Thymidylate_synthase"/>
</dbReference>
<dbReference type="InterPro" id="IPR020940">
    <property type="entry name" value="Thymidylate_synthase_AS"/>
</dbReference>
<dbReference type="NCBIfam" id="NF002498">
    <property type="entry name" value="PRK01827.1-4"/>
    <property type="match status" value="1"/>
</dbReference>
<dbReference type="NCBIfam" id="TIGR03284">
    <property type="entry name" value="thym_sym"/>
    <property type="match status" value="1"/>
</dbReference>
<dbReference type="PANTHER" id="PTHR11548:SF9">
    <property type="entry name" value="THYMIDYLATE SYNTHASE"/>
    <property type="match status" value="1"/>
</dbReference>
<dbReference type="PANTHER" id="PTHR11548">
    <property type="entry name" value="THYMIDYLATE SYNTHASE 1"/>
    <property type="match status" value="1"/>
</dbReference>
<dbReference type="Pfam" id="PF00303">
    <property type="entry name" value="Thymidylat_synt"/>
    <property type="match status" value="1"/>
</dbReference>
<dbReference type="PRINTS" id="PR00108">
    <property type="entry name" value="THYMDSNTHASE"/>
</dbReference>
<dbReference type="SUPFAM" id="SSF55831">
    <property type="entry name" value="Thymidylate synthase/dCMP hydroxymethylase"/>
    <property type="match status" value="1"/>
</dbReference>
<dbReference type="PROSITE" id="PS00091">
    <property type="entry name" value="THYMIDYLATE_SYNTHASE"/>
    <property type="match status" value="1"/>
</dbReference>
<accession>Q4QM04</accession>
<feature type="chain" id="PRO_0000140964" description="Thymidylate synthase">
    <location>
        <begin position="1"/>
        <end position="283"/>
    </location>
</feature>
<feature type="active site" description="Nucleophile" evidence="1">
    <location>
        <position position="160"/>
    </location>
</feature>
<feature type="binding site" evidence="1">
    <location>
        <position position="22"/>
    </location>
    <ligand>
        <name>dUMP</name>
        <dbReference type="ChEBI" id="CHEBI:246422"/>
    </ligand>
</feature>
<feature type="binding site" evidence="1">
    <location>
        <begin position="180"/>
        <end position="183"/>
    </location>
    <ligand>
        <name>dUMP</name>
        <dbReference type="ChEBI" id="CHEBI:246422"/>
    </ligand>
</feature>
<feature type="binding site" evidence="1">
    <location>
        <position position="183"/>
    </location>
    <ligand>
        <name>(6R)-5,10-methylene-5,6,7,8-tetrahydrofolate</name>
        <dbReference type="ChEBI" id="CHEBI:15636"/>
    </ligand>
</feature>
<feature type="binding site" evidence="1">
    <location>
        <position position="191"/>
    </location>
    <ligand>
        <name>dUMP</name>
        <dbReference type="ChEBI" id="CHEBI:246422"/>
    </ligand>
</feature>
<feature type="binding site" evidence="1">
    <location>
        <begin position="221"/>
        <end position="223"/>
    </location>
    <ligand>
        <name>dUMP</name>
        <dbReference type="ChEBI" id="CHEBI:246422"/>
    </ligand>
</feature>
<feature type="binding site" evidence="1">
    <location>
        <position position="282"/>
    </location>
    <ligand>
        <name>(6R)-5,10-methylene-5,6,7,8-tetrahydrofolate</name>
        <dbReference type="ChEBI" id="CHEBI:15636"/>
    </ligand>
</feature>
<protein>
    <recommendedName>
        <fullName evidence="1">Thymidylate synthase</fullName>
        <shortName evidence="1">TS</shortName>
        <shortName evidence="1">TSase</shortName>
        <ecNumber evidence="1">2.1.1.45</ecNumber>
    </recommendedName>
</protein>
<evidence type="ECO:0000255" key="1">
    <source>
        <dbReference type="HAMAP-Rule" id="MF_00008"/>
    </source>
</evidence>
<organism>
    <name type="scientific">Haemophilus influenzae (strain 86-028NP)</name>
    <dbReference type="NCBI Taxonomy" id="281310"/>
    <lineage>
        <taxon>Bacteria</taxon>
        <taxon>Pseudomonadati</taxon>
        <taxon>Pseudomonadota</taxon>
        <taxon>Gammaproteobacteria</taxon>
        <taxon>Pasteurellales</taxon>
        <taxon>Pasteurellaceae</taxon>
        <taxon>Haemophilus</taxon>
    </lineage>
</organism>
<gene>
    <name evidence="1" type="primary">thyA</name>
    <name type="ordered locus">NTHI1072</name>
</gene>